<protein>
    <recommendedName>
        <fullName evidence="5">Septin-1</fullName>
    </recommendedName>
</protein>
<evidence type="ECO:0000250" key="1"/>
<evidence type="ECO:0000250" key="2">
    <source>
        <dbReference type="UniProtKB" id="P42209"/>
    </source>
</evidence>
<evidence type="ECO:0000250" key="3">
    <source>
        <dbReference type="UniProtKB" id="Q8WYJ6"/>
    </source>
</evidence>
<evidence type="ECO:0000255" key="4">
    <source>
        <dbReference type="PROSITE-ProRule" id="PRU01056"/>
    </source>
</evidence>
<evidence type="ECO:0000305" key="5"/>
<accession>A5PJU9</accession>
<proteinExistence type="evidence at transcript level"/>
<gene>
    <name evidence="3" type="primary">SEPTIN1</name>
    <name type="synonym">SEPT1</name>
</gene>
<name>SEPT1_BOVIN</name>
<dbReference type="EMBL" id="BC142247">
    <property type="protein sequence ID" value="AAI42248.1"/>
    <property type="molecule type" value="mRNA"/>
</dbReference>
<dbReference type="RefSeq" id="NP_001092417.1">
    <property type="nucleotide sequence ID" value="NM_001098947.2"/>
</dbReference>
<dbReference type="SMR" id="A5PJU9"/>
<dbReference type="FunCoup" id="A5PJU9">
    <property type="interactions" value="241"/>
</dbReference>
<dbReference type="STRING" id="9913.ENSBTAP00000028271"/>
<dbReference type="PaxDb" id="9913-ENSBTAP00000028271"/>
<dbReference type="Ensembl" id="ENSBTAT00000121975.1">
    <property type="protein sequence ID" value="ENSBTAP00000080789.1"/>
    <property type="gene ID" value="ENSBTAG00000021219.5"/>
</dbReference>
<dbReference type="GeneID" id="512478"/>
<dbReference type="KEGG" id="bta:512478"/>
<dbReference type="CTD" id="1731"/>
<dbReference type="VEuPathDB" id="HostDB:ENSBTAG00000021219"/>
<dbReference type="VGNC" id="VGNC:34449">
    <property type="gene designation" value="SEPTIN1"/>
</dbReference>
<dbReference type="eggNOG" id="KOG2655">
    <property type="taxonomic scope" value="Eukaryota"/>
</dbReference>
<dbReference type="GeneTree" id="ENSGT00940000161794"/>
<dbReference type="HOGENOM" id="CLU_017718_0_0_1"/>
<dbReference type="InParanoid" id="A5PJU9"/>
<dbReference type="OMA" id="EMKGSIP"/>
<dbReference type="OrthoDB" id="416553at2759"/>
<dbReference type="TreeFam" id="TF101079"/>
<dbReference type="Proteomes" id="UP000009136">
    <property type="component" value="Chromosome 25"/>
</dbReference>
<dbReference type="Bgee" id="ENSBTAG00000021219">
    <property type="expression patterns" value="Expressed in thymus and 103 other cell types or tissues"/>
</dbReference>
<dbReference type="GO" id="GO:0032153">
    <property type="term" value="C:cell division site"/>
    <property type="evidence" value="ECO:0000318"/>
    <property type="project" value="GO_Central"/>
</dbReference>
<dbReference type="GO" id="GO:0005813">
    <property type="term" value="C:centrosome"/>
    <property type="evidence" value="ECO:0007669"/>
    <property type="project" value="UniProtKB-SubCell"/>
</dbReference>
<dbReference type="GO" id="GO:0015630">
    <property type="term" value="C:microtubule cytoskeleton"/>
    <property type="evidence" value="ECO:0000318"/>
    <property type="project" value="GO_Central"/>
</dbReference>
<dbReference type="GO" id="GO:0030496">
    <property type="term" value="C:midbody"/>
    <property type="evidence" value="ECO:0007669"/>
    <property type="project" value="UniProtKB-SubCell"/>
</dbReference>
<dbReference type="GO" id="GO:0031105">
    <property type="term" value="C:septin complex"/>
    <property type="evidence" value="ECO:0000318"/>
    <property type="project" value="GO_Central"/>
</dbReference>
<dbReference type="GO" id="GO:0005940">
    <property type="term" value="C:septin ring"/>
    <property type="evidence" value="ECO:0000318"/>
    <property type="project" value="GO_Central"/>
</dbReference>
<dbReference type="GO" id="GO:0008021">
    <property type="term" value="C:synaptic vesicle"/>
    <property type="evidence" value="ECO:0000318"/>
    <property type="project" value="GO_Central"/>
</dbReference>
<dbReference type="GO" id="GO:0005525">
    <property type="term" value="F:GTP binding"/>
    <property type="evidence" value="ECO:0007669"/>
    <property type="project" value="UniProtKB-KW"/>
</dbReference>
<dbReference type="GO" id="GO:0003924">
    <property type="term" value="F:GTPase activity"/>
    <property type="evidence" value="ECO:0000318"/>
    <property type="project" value="GO_Central"/>
</dbReference>
<dbReference type="GO" id="GO:0060090">
    <property type="term" value="F:molecular adaptor activity"/>
    <property type="evidence" value="ECO:0000318"/>
    <property type="project" value="GO_Central"/>
</dbReference>
<dbReference type="GO" id="GO:0061640">
    <property type="term" value="P:cytoskeleton-dependent cytokinesis"/>
    <property type="evidence" value="ECO:0000318"/>
    <property type="project" value="GO_Central"/>
</dbReference>
<dbReference type="GO" id="GO:0008104">
    <property type="term" value="P:protein localization"/>
    <property type="evidence" value="ECO:0000318"/>
    <property type="project" value="GO_Central"/>
</dbReference>
<dbReference type="GO" id="GO:0017157">
    <property type="term" value="P:regulation of exocytosis"/>
    <property type="evidence" value="ECO:0000318"/>
    <property type="project" value="GO_Central"/>
</dbReference>
<dbReference type="CDD" id="cd01850">
    <property type="entry name" value="CDC_Septin"/>
    <property type="match status" value="1"/>
</dbReference>
<dbReference type="FunFam" id="3.40.50.300:FF:001012">
    <property type="entry name" value="Septin 1"/>
    <property type="match status" value="1"/>
</dbReference>
<dbReference type="Gene3D" id="3.40.50.300">
    <property type="entry name" value="P-loop containing nucleotide triphosphate hydrolases"/>
    <property type="match status" value="1"/>
</dbReference>
<dbReference type="InterPro" id="IPR030379">
    <property type="entry name" value="G_SEPTIN_dom"/>
</dbReference>
<dbReference type="InterPro" id="IPR027417">
    <property type="entry name" value="P-loop_NTPase"/>
</dbReference>
<dbReference type="InterPro" id="IPR016491">
    <property type="entry name" value="Septin"/>
</dbReference>
<dbReference type="PANTHER" id="PTHR18884">
    <property type="entry name" value="SEPTIN"/>
    <property type="match status" value="1"/>
</dbReference>
<dbReference type="Pfam" id="PF00735">
    <property type="entry name" value="Septin"/>
    <property type="match status" value="1"/>
</dbReference>
<dbReference type="PIRSF" id="PIRSF006698">
    <property type="entry name" value="Septin"/>
    <property type="match status" value="1"/>
</dbReference>
<dbReference type="SUPFAM" id="SSF52540">
    <property type="entry name" value="P-loop containing nucleoside triphosphate hydrolases"/>
    <property type="match status" value="1"/>
</dbReference>
<dbReference type="PROSITE" id="PS51719">
    <property type="entry name" value="G_SEPTIN"/>
    <property type="match status" value="1"/>
</dbReference>
<comment type="function">
    <text evidence="1 5">Filament-forming cytoskeletal GTPase (By similarity). May play a role in cytokinesis (Potential).</text>
</comment>
<comment type="subunit">
    <text evidence="1">Septins polymerize into heterooligomeric protein complexes that form filaments, and can associate with cellular membranes, actin filaments and microtubules. GTPase activity is required for filament formation (By similarity). Interacts with AURKB (By similarity).</text>
</comment>
<comment type="subcellular location">
    <subcellularLocation>
        <location evidence="1">Cytoplasm</location>
    </subcellularLocation>
    <subcellularLocation>
        <location evidence="1">Cytoplasm</location>
        <location evidence="1">Cytoskeleton</location>
    </subcellularLocation>
    <subcellularLocation>
        <location evidence="1">Cytoplasm</location>
        <location evidence="1">Cytoskeleton</location>
        <location evidence="1">Microtubule organizing center</location>
        <location evidence="1">Centrosome</location>
    </subcellularLocation>
    <subcellularLocation>
        <location evidence="1">Midbody</location>
    </subcellularLocation>
    <text evidence="1">Remains at the centrosomes and the nearby microtubules throughout mitosis. Localizes to the midbody during cytokinesis (By similarity).</text>
</comment>
<comment type="similarity">
    <text evidence="4">Belongs to the TRAFAC class TrmE-Era-EngA-EngB-Septin-like GTPase superfamily. Septin GTPase family.</text>
</comment>
<reference key="1">
    <citation type="submission" date="2007-06" db="EMBL/GenBank/DDBJ databases">
        <authorList>
            <consortium name="NIH - Mammalian Gene Collection (MGC) project"/>
        </authorList>
    </citation>
    <scope>NUCLEOTIDE SEQUENCE [LARGE SCALE MRNA]</scope>
    <source>
        <strain>Hereford</strain>
        <tissue>Thymus</tissue>
    </source>
</reference>
<organism>
    <name type="scientific">Bos taurus</name>
    <name type="common">Bovine</name>
    <dbReference type="NCBI Taxonomy" id="9913"/>
    <lineage>
        <taxon>Eukaryota</taxon>
        <taxon>Metazoa</taxon>
        <taxon>Chordata</taxon>
        <taxon>Craniata</taxon>
        <taxon>Vertebrata</taxon>
        <taxon>Euteleostomi</taxon>
        <taxon>Mammalia</taxon>
        <taxon>Eutheria</taxon>
        <taxon>Laurasiatheria</taxon>
        <taxon>Artiodactyla</taxon>
        <taxon>Ruminantia</taxon>
        <taxon>Pecora</taxon>
        <taxon>Bovidae</taxon>
        <taxon>Bovinae</taxon>
        <taxon>Bos</taxon>
    </lineage>
</organism>
<sequence>MDKEYVGFAALPNQLHRKSVKKGFDFTLMVAGESGLGKSTLINSLFLTNLYEDRQIPEASARLTQTLTIERRGVEIEEGGIKVKLTVVDTPGFGDSVDCSDCWLPVVRFIEEQFEQYLRDESGLNRKNIQDSRVHCCLYFISPFGRGLRPLDVAFLRAVHEKVNIIPVIGKADALMPKETQALKQKIREQLKEEEINIYQFPECDSDEDEDFKRQDAEMKESIPFAVVGSCEVVRDGGPRPVRGRHYSWGTVEVENPHHCDFLNLRRMLVQTHLQDLKEVTHDLLYEGYRARCLQSLARPGARDRASRSKLSRQSATEIPLPMLPLADTEKLIREKDEELRRMQEMLEKMQAQMQLSQAQGEQSDAL</sequence>
<keyword id="KW-0131">Cell cycle</keyword>
<keyword id="KW-0132">Cell division</keyword>
<keyword id="KW-0963">Cytoplasm</keyword>
<keyword id="KW-0206">Cytoskeleton</keyword>
<keyword id="KW-0342">GTP-binding</keyword>
<keyword id="KW-0547">Nucleotide-binding</keyword>
<keyword id="KW-0597">Phosphoprotein</keyword>
<keyword id="KW-1185">Reference proteome</keyword>
<feature type="chain" id="PRO_0000363218" description="Septin-1">
    <location>
        <begin position="1"/>
        <end position="367"/>
    </location>
</feature>
<feature type="domain" description="Septin-type G" evidence="4">
    <location>
        <begin position="22"/>
        <end position="296"/>
    </location>
</feature>
<feature type="region of interest" description="G1 motif" evidence="4">
    <location>
        <begin position="32"/>
        <end position="39"/>
    </location>
</feature>
<feature type="region of interest" description="G3 motif" evidence="4">
    <location>
        <begin position="89"/>
        <end position="92"/>
    </location>
</feature>
<feature type="region of interest" description="G4 motif" evidence="4">
    <location>
        <begin position="170"/>
        <end position="173"/>
    </location>
</feature>
<feature type="binding site" evidence="1">
    <location>
        <begin position="32"/>
        <end position="39"/>
    </location>
    <ligand>
        <name>GTP</name>
        <dbReference type="ChEBI" id="CHEBI:37565"/>
    </ligand>
</feature>
<feature type="binding site" evidence="1">
    <location>
        <position position="66"/>
    </location>
    <ligand>
        <name>GTP</name>
        <dbReference type="ChEBI" id="CHEBI:37565"/>
    </ligand>
</feature>
<feature type="binding site" evidence="1">
    <location>
        <position position="92"/>
    </location>
    <ligand>
        <name>GTP</name>
        <dbReference type="ChEBI" id="CHEBI:37565"/>
    </ligand>
</feature>
<feature type="binding site" evidence="1">
    <location>
        <begin position="171"/>
        <end position="179"/>
    </location>
    <ligand>
        <name>GTP</name>
        <dbReference type="ChEBI" id="CHEBI:37565"/>
    </ligand>
</feature>
<feature type="binding site" evidence="1">
    <location>
        <position position="229"/>
    </location>
    <ligand>
        <name>GTP</name>
        <dbReference type="ChEBI" id="CHEBI:37565"/>
    </ligand>
</feature>
<feature type="binding site" evidence="1">
    <location>
        <position position="245"/>
    </location>
    <ligand>
        <name>GTP</name>
        <dbReference type="ChEBI" id="CHEBI:37565"/>
    </ligand>
</feature>
<feature type="modified residue" description="Phosphoserine" evidence="3">
    <location>
        <position position="206"/>
    </location>
</feature>
<feature type="modified residue" description="Phosphoserine; by AURKB" evidence="3">
    <location>
        <position position="248"/>
    </location>
</feature>
<feature type="modified residue" description="Phosphothreonine" evidence="2">
    <location>
        <position position="251"/>
    </location>
</feature>
<feature type="modified residue" description="Phosphoserine; by AURKB" evidence="3">
    <location>
        <position position="307"/>
    </location>
</feature>
<feature type="modified residue" description="Phosphoserine; by AURKB" evidence="3">
    <location>
        <position position="315"/>
    </location>
</feature>